<reference key="1">
    <citation type="journal article" date="2005" name="Nucleic Acids Res.">
        <title>Genome dynamics and diversity of Shigella species, the etiologic agents of bacillary dysentery.</title>
        <authorList>
            <person name="Yang F."/>
            <person name="Yang J."/>
            <person name="Zhang X."/>
            <person name="Chen L."/>
            <person name="Jiang Y."/>
            <person name="Yan Y."/>
            <person name="Tang X."/>
            <person name="Wang J."/>
            <person name="Xiong Z."/>
            <person name="Dong J."/>
            <person name="Xue Y."/>
            <person name="Zhu Y."/>
            <person name="Xu X."/>
            <person name="Sun L."/>
            <person name="Chen S."/>
            <person name="Nie H."/>
            <person name="Peng J."/>
            <person name="Xu J."/>
            <person name="Wang Y."/>
            <person name="Yuan Z."/>
            <person name="Wen Y."/>
            <person name="Yao Z."/>
            <person name="Shen Y."/>
            <person name="Qiang B."/>
            <person name="Hou Y."/>
            <person name="Yu J."/>
            <person name="Jin Q."/>
        </authorList>
    </citation>
    <scope>NUCLEOTIDE SEQUENCE [LARGE SCALE GENOMIC DNA]</scope>
    <source>
        <strain>Sd197</strain>
    </source>
</reference>
<sequence length="275" mass="30681">MTLQQQIIKALGAKPQINAEEEIRRSIDFLKSYLQTYPFIKSLVLGISGGQDSTLAGKLCQMAINELRQETGNESLQFIAVRLPYGVQADEQDCQDAIAFIQPDRVLTVNIKGAVLASEQALREAGIELSDFVRGNEKARERMKAQYSIAGMTSGVVVGTDHAAEAITGFFTKYGDGGTDINPLYRLNKRQGKQLLAALGCPEHLYKKAPTADLEDDRPSLPDEVVLGVTYDNIDDYLEGKNVPEQVARTIENWYLKTEHKRRPPITVFDDFWKK</sequence>
<feature type="chain" id="PRO_1000077608" description="NH(3)-dependent NAD(+) synthetase">
    <location>
        <begin position="1"/>
        <end position="275"/>
    </location>
</feature>
<feature type="binding site" evidence="1">
    <location>
        <begin position="46"/>
        <end position="53"/>
    </location>
    <ligand>
        <name>ATP</name>
        <dbReference type="ChEBI" id="CHEBI:30616"/>
    </ligand>
</feature>
<feature type="binding site" evidence="1">
    <location>
        <position position="52"/>
    </location>
    <ligand>
        <name>Mg(2+)</name>
        <dbReference type="ChEBI" id="CHEBI:18420"/>
    </ligand>
</feature>
<feature type="binding site" evidence="1">
    <location>
        <position position="140"/>
    </location>
    <ligand>
        <name>deamido-NAD(+)</name>
        <dbReference type="ChEBI" id="CHEBI:58437"/>
    </ligand>
</feature>
<feature type="binding site" evidence="1">
    <location>
        <position position="160"/>
    </location>
    <ligand>
        <name>ATP</name>
        <dbReference type="ChEBI" id="CHEBI:30616"/>
    </ligand>
</feature>
<feature type="binding site" evidence="1">
    <location>
        <position position="165"/>
    </location>
    <ligand>
        <name>Mg(2+)</name>
        <dbReference type="ChEBI" id="CHEBI:18420"/>
    </ligand>
</feature>
<feature type="binding site" evidence="1">
    <location>
        <position position="173"/>
    </location>
    <ligand>
        <name>deamido-NAD(+)</name>
        <dbReference type="ChEBI" id="CHEBI:58437"/>
    </ligand>
</feature>
<feature type="binding site" evidence="1">
    <location>
        <position position="180"/>
    </location>
    <ligand>
        <name>deamido-NAD(+)</name>
        <dbReference type="ChEBI" id="CHEBI:58437"/>
    </ligand>
</feature>
<feature type="binding site" evidence="1">
    <location>
        <position position="189"/>
    </location>
    <ligand>
        <name>ATP</name>
        <dbReference type="ChEBI" id="CHEBI:30616"/>
    </ligand>
</feature>
<feature type="binding site" evidence="1">
    <location>
        <position position="211"/>
    </location>
    <ligand>
        <name>ATP</name>
        <dbReference type="ChEBI" id="CHEBI:30616"/>
    </ligand>
</feature>
<feature type="binding site" evidence="1">
    <location>
        <begin position="260"/>
        <end position="261"/>
    </location>
    <ligand>
        <name>deamido-NAD(+)</name>
        <dbReference type="ChEBI" id="CHEBI:58437"/>
    </ligand>
</feature>
<gene>
    <name evidence="1" type="primary">nadE</name>
    <name type="ordered locus">SDY_1540</name>
</gene>
<organism>
    <name type="scientific">Shigella dysenteriae serotype 1 (strain Sd197)</name>
    <dbReference type="NCBI Taxonomy" id="300267"/>
    <lineage>
        <taxon>Bacteria</taxon>
        <taxon>Pseudomonadati</taxon>
        <taxon>Pseudomonadota</taxon>
        <taxon>Gammaproteobacteria</taxon>
        <taxon>Enterobacterales</taxon>
        <taxon>Enterobacteriaceae</taxon>
        <taxon>Shigella</taxon>
    </lineage>
</organism>
<evidence type="ECO:0000255" key="1">
    <source>
        <dbReference type="HAMAP-Rule" id="MF_00193"/>
    </source>
</evidence>
<name>NADE_SHIDS</name>
<protein>
    <recommendedName>
        <fullName evidence="1">NH(3)-dependent NAD(+) synthetase</fullName>
        <ecNumber evidence="1">6.3.1.5</ecNumber>
    </recommendedName>
</protein>
<proteinExistence type="inferred from homology"/>
<dbReference type="EC" id="6.3.1.5" evidence="1"/>
<dbReference type="EMBL" id="CP000034">
    <property type="protein sequence ID" value="ABB61676.1"/>
    <property type="molecule type" value="Genomic_DNA"/>
</dbReference>
<dbReference type="RefSeq" id="WP_000175020.1">
    <property type="nucleotide sequence ID" value="NC_007606.1"/>
</dbReference>
<dbReference type="RefSeq" id="YP_403167.1">
    <property type="nucleotide sequence ID" value="NC_007606.1"/>
</dbReference>
<dbReference type="SMR" id="Q32G79"/>
<dbReference type="STRING" id="300267.SDY_1540"/>
<dbReference type="EnsemblBacteria" id="ABB61676">
    <property type="protein sequence ID" value="ABB61676"/>
    <property type="gene ID" value="SDY_1540"/>
</dbReference>
<dbReference type="KEGG" id="sdy:SDY_1540"/>
<dbReference type="PATRIC" id="fig|300267.13.peg.1845"/>
<dbReference type="HOGENOM" id="CLU_059327_3_0_6"/>
<dbReference type="UniPathway" id="UPA00253">
    <property type="reaction ID" value="UER00333"/>
</dbReference>
<dbReference type="Proteomes" id="UP000002716">
    <property type="component" value="Chromosome"/>
</dbReference>
<dbReference type="GO" id="GO:0005737">
    <property type="term" value="C:cytoplasm"/>
    <property type="evidence" value="ECO:0007669"/>
    <property type="project" value="InterPro"/>
</dbReference>
<dbReference type="GO" id="GO:0005524">
    <property type="term" value="F:ATP binding"/>
    <property type="evidence" value="ECO:0007669"/>
    <property type="project" value="UniProtKB-UniRule"/>
</dbReference>
<dbReference type="GO" id="GO:0004359">
    <property type="term" value="F:glutaminase activity"/>
    <property type="evidence" value="ECO:0007669"/>
    <property type="project" value="InterPro"/>
</dbReference>
<dbReference type="GO" id="GO:0046872">
    <property type="term" value="F:metal ion binding"/>
    <property type="evidence" value="ECO:0007669"/>
    <property type="project" value="UniProtKB-KW"/>
</dbReference>
<dbReference type="GO" id="GO:0003952">
    <property type="term" value="F:NAD+ synthase (glutamine-hydrolyzing) activity"/>
    <property type="evidence" value="ECO:0007669"/>
    <property type="project" value="InterPro"/>
</dbReference>
<dbReference type="GO" id="GO:0008795">
    <property type="term" value="F:NAD+ synthase activity"/>
    <property type="evidence" value="ECO:0007669"/>
    <property type="project" value="UniProtKB-UniRule"/>
</dbReference>
<dbReference type="GO" id="GO:0009435">
    <property type="term" value="P:NAD biosynthetic process"/>
    <property type="evidence" value="ECO:0007669"/>
    <property type="project" value="UniProtKB-UniRule"/>
</dbReference>
<dbReference type="CDD" id="cd00553">
    <property type="entry name" value="NAD_synthase"/>
    <property type="match status" value="1"/>
</dbReference>
<dbReference type="FunFam" id="3.40.50.620:FF:000015">
    <property type="entry name" value="NH(3)-dependent NAD(+) synthetase"/>
    <property type="match status" value="1"/>
</dbReference>
<dbReference type="Gene3D" id="3.40.50.620">
    <property type="entry name" value="HUPs"/>
    <property type="match status" value="1"/>
</dbReference>
<dbReference type="HAMAP" id="MF_00193">
    <property type="entry name" value="NadE_ammonia_dep"/>
    <property type="match status" value="1"/>
</dbReference>
<dbReference type="InterPro" id="IPR022310">
    <property type="entry name" value="NAD/GMP_synthase"/>
</dbReference>
<dbReference type="InterPro" id="IPR003694">
    <property type="entry name" value="NAD_synthase"/>
</dbReference>
<dbReference type="InterPro" id="IPR022926">
    <property type="entry name" value="NH(3)-dep_NAD(+)_synth"/>
</dbReference>
<dbReference type="InterPro" id="IPR014729">
    <property type="entry name" value="Rossmann-like_a/b/a_fold"/>
</dbReference>
<dbReference type="NCBIfam" id="TIGR00552">
    <property type="entry name" value="nadE"/>
    <property type="match status" value="1"/>
</dbReference>
<dbReference type="NCBIfam" id="NF001979">
    <property type="entry name" value="PRK00768.1"/>
    <property type="match status" value="1"/>
</dbReference>
<dbReference type="PANTHER" id="PTHR23090">
    <property type="entry name" value="NH 3 /GLUTAMINE-DEPENDENT NAD + SYNTHETASE"/>
    <property type="match status" value="1"/>
</dbReference>
<dbReference type="PANTHER" id="PTHR23090:SF7">
    <property type="entry name" value="NH(3)-DEPENDENT NAD(+) SYNTHETASE"/>
    <property type="match status" value="1"/>
</dbReference>
<dbReference type="Pfam" id="PF02540">
    <property type="entry name" value="NAD_synthase"/>
    <property type="match status" value="1"/>
</dbReference>
<dbReference type="SUPFAM" id="SSF52402">
    <property type="entry name" value="Adenine nucleotide alpha hydrolases-like"/>
    <property type="match status" value="1"/>
</dbReference>
<comment type="function">
    <text evidence="1">Catalyzes the ATP-dependent amidation of deamido-NAD to form NAD. Uses ammonia as a nitrogen source.</text>
</comment>
<comment type="catalytic activity">
    <reaction evidence="1">
        <text>deamido-NAD(+) + NH4(+) + ATP = AMP + diphosphate + NAD(+) + H(+)</text>
        <dbReference type="Rhea" id="RHEA:21188"/>
        <dbReference type="ChEBI" id="CHEBI:15378"/>
        <dbReference type="ChEBI" id="CHEBI:28938"/>
        <dbReference type="ChEBI" id="CHEBI:30616"/>
        <dbReference type="ChEBI" id="CHEBI:33019"/>
        <dbReference type="ChEBI" id="CHEBI:57540"/>
        <dbReference type="ChEBI" id="CHEBI:58437"/>
        <dbReference type="ChEBI" id="CHEBI:456215"/>
        <dbReference type="EC" id="6.3.1.5"/>
    </reaction>
</comment>
<comment type="pathway">
    <text evidence="1">Cofactor biosynthesis; NAD(+) biosynthesis; NAD(+) from deamido-NAD(+) (ammonia route): step 1/1.</text>
</comment>
<comment type="subunit">
    <text evidence="1">Homodimer.</text>
</comment>
<comment type="similarity">
    <text evidence="1">Belongs to the NAD synthetase family.</text>
</comment>
<accession>Q32G79</accession>
<keyword id="KW-0067">ATP-binding</keyword>
<keyword id="KW-0436">Ligase</keyword>
<keyword id="KW-0460">Magnesium</keyword>
<keyword id="KW-0479">Metal-binding</keyword>
<keyword id="KW-0520">NAD</keyword>
<keyword id="KW-0547">Nucleotide-binding</keyword>
<keyword id="KW-1185">Reference proteome</keyword>